<gene>
    <name evidence="1" type="primary">cofG</name>
    <name type="ordered locus">MK0898</name>
</gene>
<name>COFG_METKA</name>
<dbReference type="EC" id="4.3.1.32" evidence="1"/>
<dbReference type="EMBL" id="AE009439">
    <property type="protein sequence ID" value="AAM02111.1"/>
    <property type="status" value="ALT_INIT"/>
    <property type="molecule type" value="Genomic_DNA"/>
</dbReference>
<dbReference type="SMR" id="Q8TWY3"/>
<dbReference type="FunCoup" id="Q8TWY3">
    <property type="interactions" value="84"/>
</dbReference>
<dbReference type="STRING" id="190192.MK0898"/>
<dbReference type="PaxDb" id="190192-MK0898"/>
<dbReference type="EnsemblBacteria" id="AAM02111">
    <property type="protein sequence ID" value="AAM02111"/>
    <property type="gene ID" value="MK0898"/>
</dbReference>
<dbReference type="KEGG" id="mka:MK0898"/>
<dbReference type="PATRIC" id="fig|190192.8.peg.940"/>
<dbReference type="HOGENOM" id="CLU_054174_0_0_2"/>
<dbReference type="InParanoid" id="Q8TWY3"/>
<dbReference type="UniPathway" id="UPA00072"/>
<dbReference type="Proteomes" id="UP000001826">
    <property type="component" value="Chromosome"/>
</dbReference>
<dbReference type="GO" id="GO:0051539">
    <property type="term" value="F:4 iron, 4 sulfur cluster binding"/>
    <property type="evidence" value="ECO:0007669"/>
    <property type="project" value="UniProtKB-KW"/>
</dbReference>
<dbReference type="GO" id="GO:0044689">
    <property type="term" value="F:7,8-didemethyl-8-hydroxy-5-deazariboflavin synthase activity"/>
    <property type="evidence" value="ECO:0007669"/>
    <property type="project" value="UniProtKB-EC"/>
</dbReference>
<dbReference type="GO" id="GO:0005506">
    <property type="term" value="F:iron ion binding"/>
    <property type="evidence" value="ECO:0007669"/>
    <property type="project" value="UniProtKB-UniRule"/>
</dbReference>
<dbReference type="GO" id="GO:0016765">
    <property type="term" value="F:transferase activity, transferring alkyl or aryl (other than methyl) groups"/>
    <property type="evidence" value="ECO:0007669"/>
    <property type="project" value="InterPro"/>
</dbReference>
<dbReference type="GO" id="GO:0044272">
    <property type="term" value="P:sulfur compound biosynthetic process"/>
    <property type="evidence" value="ECO:0007669"/>
    <property type="project" value="UniProtKB-ARBA"/>
</dbReference>
<dbReference type="GO" id="GO:0042364">
    <property type="term" value="P:water-soluble vitamin biosynthetic process"/>
    <property type="evidence" value="ECO:0007669"/>
    <property type="project" value="UniProtKB-ARBA"/>
</dbReference>
<dbReference type="CDD" id="cd01335">
    <property type="entry name" value="Radical_SAM"/>
    <property type="match status" value="1"/>
</dbReference>
<dbReference type="Gene3D" id="3.20.20.70">
    <property type="entry name" value="Aldolase class I"/>
    <property type="match status" value="1"/>
</dbReference>
<dbReference type="HAMAP" id="MF_01611">
    <property type="entry name" value="FO_synth_sub1"/>
    <property type="match status" value="1"/>
</dbReference>
<dbReference type="InterPro" id="IPR013785">
    <property type="entry name" value="Aldolase_TIM"/>
</dbReference>
<dbReference type="InterPro" id="IPR010722">
    <property type="entry name" value="BATS_dom"/>
</dbReference>
<dbReference type="InterPro" id="IPR019939">
    <property type="entry name" value="CofG_family"/>
</dbReference>
<dbReference type="InterPro" id="IPR006638">
    <property type="entry name" value="Elp3/MiaA/NifB-like_rSAM"/>
</dbReference>
<dbReference type="InterPro" id="IPR034405">
    <property type="entry name" value="F420"/>
</dbReference>
<dbReference type="InterPro" id="IPR007197">
    <property type="entry name" value="rSAM"/>
</dbReference>
<dbReference type="NCBIfam" id="TIGR03550">
    <property type="entry name" value="F420_cofG"/>
    <property type="match status" value="1"/>
</dbReference>
<dbReference type="NCBIfam" id="NF004884">
    <property type="entry name" value="PRK06245.1"/>
    <property type="match status" value="1"/>
</dbReference>
<dbReference type="PANTHER" id="PTHR43076:SF15">
    <property type="entry name" value="7,8-DIDEMETHYL-8-HYDROXY-5-DEAZARIBOFLAVIN SYNTHASE"/>
    <property type="match status" value="1"/>
</dbReference>
<dbReference type="PANTHER" id="PTHR43076">
    <property type="entry name" value="FO SYNTHASE (COFH)"/>
    <property type="match status" value="1"/>
</dbReference>
<dbReference type="Pfam" id="PF04055">
    <property type="entry name" value="Radical_SAM"/>
    <property type="match status" value="1"/>
</dbReference>
<dbReference type="SFLD" id="SFLDF00294">
    <property type="entry name" value="7_8-didemethyl-8-hydroxy-5-dea"/>
    <property type="match status" value="1"/>
</dbReference>
<dbReference type="SFLD" id="SFLDG01388">
    <property type="entry name" value="7_8-didemethyl-8-hydroxy-5-dea"/>
    <property type="match status" value="1"/>
</dbReference>
<dbReference type="SMART" id="SM00876">
    <property type="entry name" value="BATS"/>
    <property type="match status" value="1"/>
</dbReference>
<dbReference type="SMART" id="SM00729">
    <property type="entry name" value="Elp3"/>
    <property type="match status" value="1"/>
</dbReference>
<dbReference type="SUPFAM" id="SSF102114">
    <property type="entry name" value="Radical SAM enzymes"/>
    <property type="match status" value="1"/>
</dbReference>
<dbReference type="PROSITE" id="PS51918">
    <property type="entry name" value="RADICAL_SAM"/>
    <property type="match status" value="1"/>
</dbReference>
<reference key="1">
    <citation type="journal article" date="2002" name="Proc. Natl. Acad. Sci. U.S.A.">
        <title>The complete genome of hyperthermophile Methanopyrus kandleri AV19 and monophyly of archaeal methanogens.</title>
        <authorList>
            <person name="Slesarev A.I."/>
            <person name="Mezhevaya K.V."/>
            <person name="Makarova K.S."/>
            <person name="Polushin N.N."/>
            <person name="Shcherbinina O.V."/>
            <person name="Shakhova V.V."/>
            <person name="Belova G.I."/>
            <person name="Aravind L."/>
            <person name="Natale D.A."/>
            <person name="Rogozin I.B."/>
            <person name="Tatusov R.L."/>
            <person name="Wolf Y.I."/>
            <person name="Stetter K.O."/>
            <person name="Malykh A.G."/>
            <person name="Koonin E.V."/>
            <person name="Kozyavkin S.A."/>
        </authorList>
    </citation>
    <scope>NUCLEOTIDE SEQUENCE [LARGE SCALE GENOMIC DNA]</scope>
    <source>
        <strain>AV19 / DSM 6324 / JCM 9639 / NBRC 100938</strain>
    </source>
</reference>
<accession>Q8TWY3</accession>
<protein>
    <recommendedName>
        <fullName evidence="1">7,8-didemethyl-8-hydroxy-5-deazariboflavin synthase</fullName>
        <ecNumber evidence="1">4.3.1.32</ecNumber>
    </recommendedName>
    <alternativeName>
        <fullName evidence="1">FO synthase subunit 1</fullName>
    </alternativeName>
</protein>
<evidence type="ECO:0000255" key="1">
    <source>
        <dbReference type="HAMAP-Rule" id="MF_01611"/>
    </source>
</evidence>
<evidence type="ECO:0000255" key="2">
    <source>
        <dbReference type="PROSITE-ProRule" id="PRU01266"/>
    </source>
</evidence>
<evidence type="ECO:0000305" key="3"/>
<feature type="chain" id="PRO_0000147765" description="7,8-didemethyl-8-hydroxy-5-deazariboflavin synthase">
    <location>
        <begin position="1"/>
        <end position="334"/>
    </location>
</feature>
<feature type="domain" description="Radical SAM core" evidence="2">
    <location>
        <begin position="2"/>
        <end position="248"/>
    </location>
</feature>
<feature type="binding site" evidence="1">
    <location>
        <position position="16"/>
    </location>
    <ligand>
        <name>[4Fe-4S] cluster</name>
        <dbReference type="ChEBI" id="CHEBI:49883"/>
        <note>4Fe-4S-S-AdoMet</note>
    </ligand>
</feature>
<feature type="binding site" evidence="1">
    <location>
        <position position="20"/>
    </location>
    <ligand>
        <name>[4Fe-4S] cluster</name>
        <dbReference type="ChEBI" id="CHEBI:49883"/>
        <note>4Fe-4S-S-AdoMet</note>
    </ligand>
</feature>
<feature type="binding site" evidence="1">
    <location>
        <position position="23"/>
    </location>
    <ligand>
        <name>[4Fe-4S] cluster</name>
        <dbReference type="ChEBI" id="CHEBI:49883"/>
        <note>4Fe-4S-S-AdoMet</note>
    </ligand>
</feature>
<sequence length="334" mass="38797">MVSYSKNVFVPLTRLCRNRCAYCTFRREPEEVRSPYLSPEEVFEIVEKGKEAGCKEVLFTFGERPEERYDEALEWLEEHGYSSTVEYLVDLCRRCVEEYDMLPHSNPGVITKREMRKLRRWNASMGLMMEILSERLCEESGPHEHSPGKRPEERLKVLKYAGELKVPFTTGILIGIGETWEERVKTLEEIQRMHERYGHVQEVIVQNFRTKPGIPMEDHPEPTPADLLRTVATARLILPDVPVQVPPNLNRETGQLALLAGANDWGGVSPVTKDYVNPEAPWPEIEELKRLTEDVGFRLRERLPIYPEYVRRGWYHANISEVVERLSDDEGFAR</sequence>
<keyword id="KW-0004">4Fe-4S</keyword>
<keyword id="KW-0408">Iron</keyword>
<keyword id="KW-0411">Iron-sulfur</keyword>
<keyword id="KW-0456">Lyase</keyword>
<keyword id="KW-0479">Metal-binding</keyword>
<keyword id="KW-1185">Reference proteome</keyword>
<keyword id="KW-0949">S-adenosyl-L-methionine</keyword>
<comment type="function">
    <text evidence="1">Catalyzes the radical-mediated synthesis of 7,8-didemethyl-8-hydroxy-5-deazariboflavin from 5-amino-5-(4-hydroxybenzyl)-6-(D-ribitylimino)-5,6-dihydrouracil.</text>
</comment>
<comment type="catalytic activity">
    <reaction evidence="1">
        <text>5-amino-5-(4-hydroxybenzyl)-6-(D-ribitylimino)-5,6-dihydrouracil + S-adenosyl-L-methionine = 7,8-didemethyl-8-hydroxy-5-deazariboflavin + 5'-deoxyadenosine + L-methionine + NH4(+) + H(+)</text>
        <dbReference type="Rhea" id="RHEA:55204"/>
        <dbReference type="ChEBI" id="CHEBI:15378"/>
        <dbReference type="ChEBI" id="CHEBI:17319"/>
        <dbReference type="ChEBI" id="CHEBI:28938"/>
        <dbReference type="ChEBI" id="CHEBI:57844"/>
        <dbReference type="ChEBI" id="CHEBI:59789"/>
        <dbReference type="ChEBI" id="CHEBI:59904"/>
        <dbReference type="ChEBI" id="CHEBI:85936"/>
        <dbReference type="EC" id="4.3.1.32"/>
    </reaction>
</comment>
<comment type="cofactor">
    <cofactor evidence="1">
        <name>[4Fe-4S] cluster</name>
        <dbReference type="ChEBI" id="CHEBI:49883"/>
    </cofactor>
    <text evidence="1">Binds 1 [4Fe-4S] cluster. The cluster is coordinated with 3 cysteines and an exchangeable S-adenosyl-L-methionine.</text>
</comment>
<comment type="pathway">
    <text evidence="1">Cofactor biosynthesis; coenzyme F0 biosynthesis.</text>
</comment>
<comment type="subunit">
    <text evidence="1">Consists of two subunits, CofG and CofH.</text>
</comment>
<comment type="similarity">
    <text evidence="1">Belongs to the radical SAM superfamily. CofG family.</text>
</comment>
<comment type="sequence caution" evidence="3">
    <conflict type="erroneous initiation">
        <sequence resource="EMBL-CDS" id="AAM02111"/>
    </conflict>
</comment>
<organism>
    <name type="scientific">Methanopyrus kandleri (strain AV19 / DSM 6324 / JCM 9639 / NBRC 100938)</name>
    <dbReference type="NCBI Taxonomy" id="190192"/>
    <lineage>
        <taxon>Archaea</taxon>
        <taxon>Methanobacteriati</taxon>
        <taxon>Methanobacteriota</taxon>
        <taxon>Methanomada group</taxon>
        <taxon>Methanopyri</taxon>
        <taxon>Methanopyrales</taxon>
        <taxon>Methanopyraceae</taxon>
        <taxon>Methanopyrus</taxon>
    </lineage>
</organism>
<proteinExistence type="inferred from homology"/>